<proteinExistence type="inferred from homology"/>
<feature type="chain" id="PRO_0000142023" description="1-(5-phosphoribosyl)-5-[(5-phosphoribosylamino)methylideneamino] imidazole-4-carboxamide isomerase">
    <location>
        <begin position="1"/>
        <end position="249"/>
    </location>
</feature>
<feature type="active site" description="Proton acceptor" evidence="1">
    <location>
        <position position="11"/>
    </location>
</feature>
<feature type="active site" description="Proton donor" evidence="1">
    <location>
        <position position="133"/>
    </location>
</feature>
<gene>
    <name evidence="1" type="primary">hisA</name>
    <name type="ordered locus">MS1883</name>
</gene>
<name>HIS4_MANSM</name>
<accession>Q65RC0</accession>
<organism>
    <name type="scientific">Mannheimia succiniciproducens (strain KCTC 0769BP / MBEL55E)</name>
    <dbReference type="NCBI Taxonomy" id="221988"/>
    <lineage>
        <taxon>Bacteria</taxon>
        <taxon>Pseudomonadati</taxon>
        <taxon>Pseudomonadota</taxon>
        <taxon>Gammaproteobacteria</taxon>
        <taxon>Pasteurellales</taxon>
        <taxon>Pasteurellaceae</taxon>
        <taxon>Basfia</taxon>
    </lineage>
</organism>
<protein>
    <recommendedName>
        <fullName evidence="1">1-(5-phosphoribosyl)-5-[(5-phosphoribosylamino)methylideneamino] imidazole-4-carboxamide isomerase</fullName>
        <ecNumber evidence="1">5.3.1.16</ecNumber>
    </recommendedName>
    <alternativeName>
        <fullName evidence="1">Phosphoribosylformimino-5-aminoimidazole carboxamide ribotide isomerase</fullName>
    </alternativeName>
</protein>
<sequence length="249" mass="26571">MKKSIIIPALDLIDGNVVRLHQGDYAKQTTYSDNPIEQFASYLAQGAEQLHLVDLTGAKDPAKRQTALIGKIIAATHCKIQVGGGIRTEKDVADLLAVGANRVVIGSTAVKERAMVKEWFNKYGAEKFVLALDVNIDASGQKIIAISGWQEASGVSLEELIEDFQSVGLQHVLCTDISRDGTLAGSNVDLYKEICAKYPAVNFQSSGGIGSLEDIKALKGTGVAGVIVGRALLEGKFNVAEAIECWQNG</sequence>
<evidence type="ECO:0000255" key="1">
    <source>
        <dbReference type="HAMAP-Rule" id="MF_01014"/>
    </source>
</evidence>
<reference key="1">
    <citation type="journal article" date="2004" name="Nat. Biotechnol.">
        <title>The genome sequence of the capnophilic rumen bacterium Mannheimia succiniciproducens.</title>
        <authorList>
            <person name="Hong S.H."/>
            <person name="Kim J.S."/>
            <person name="Lee S.Y."/>
            <person name="In Y.H."/>
            <person name="Choi S.S."/>
            <person name="Rih J.-K."/>
            <person name="Kim C.H."/>
            <person name="Jeong H."/>
            <person name="Hur C.G."/>
            <person name="Kim J.J."/>
        </authorList>
    </citation>
    <scope>NUCLEOTIDE SEQUENCE [LARGE SCALE GENOMIC DNA]</scope>
    <source>
        <strain>KCTC 0769BP / MBEL55E</strain>
    </source>
</reference>
<dbReference type="EC" id="5.3.1.16" evidence="1"/>
<dbReference type="EMBL" id="AE016827">
    <property type="protein sequence ID" value="AAU38490.1"/>
    <property type="molecule type" value="Genomic_DNA"/>
</dbReference>
<dbReference type="RefSeq" id="WP_011201043.1">
    <property type="nucleotide sequence ID" value="NC_006300.1"/>
</dbReference>
<dbReference type="SMR" id="Q65RC0"/>
<dbReference type="STRING" id="221988.MS1883"/>
<dbReference type="KEGG" id="msu:MS1883"/>
<dbReference type="eggNOG" id="COG0106">
    <property type="taxonomic scope" value="Bacteria"/>
</dbReference>
<dbReference type="HOGENOM" id="CLU_048577_1_2_6"/>
<dbReference type="OrthoDB" id="9807749at2"/>
<dbReference type="UniPathway" id="UPA00031">
    <property type="reaction ID" value="UER00009"/>
</dbReference>
<dbReference type="Proteomes" id="UP000000607">
    <property type="component" value="Chromosome"/>
</dbReference>
<dbReference type="GO" id="GO:0005737">
    <property type="term" value="C:cytoplasm"/>
    <property type="evidence" value="ECO:0007669"/>
    <property type="project" value="UniProtKB-SubCell"/>
</dbReference>
<dbReference type="GO" id="GO:0003949">
    <property type="term" value="F:1-(5-phosphoribosyl)-5-[(5-phosphoribosylamino)methylideneamino]imidazole-4-carboxamide isomerase activity"/>
    <property type="evidence" value="ECO:0007669"/>
    <property type="project" value="UniProtKB-UniRule"/>
</dbReference>
<dbReference type="GO" id="GO:0000105">
    <property type="term" value="P:L-histidine biosynthetic process"/>
    <property type="evidence" value="ECO:0007669"/>
    <property type="project" value="UniProtKB-UniRule"/>
</dbReference>
<dbReference type="GO" id="GO:0000162">
    <property type="term" value="P:L-tryptophan biosynthetic process"/>
    <property type="evidence" value="ECO:0007669"/>
    <property type="project" value="TreeGrafter"/>
</dbReference>
<dbReference type="CDD" id="cd04732">
    <property type="entry name" value="HisA"/>
    <property type="match status" value="1"/>
</dbReference>
<dbReference type="FunFam" id="3.20.20.70:FF:000009">
    <property type="entry name" value="1-(5-phosphoribosyl)-5-[(5-phosphoribosylamino)methylideneamino] imidazole-4-carboxamide isomerase"/>
    <property type="match status" value="1"/>
</dbReference>
<dbReference type="Gene3D" id="3.20.20.70">
    <property type="entry name" value="Aldolase class I"/>
    <property type="match status" value="1"/>
</dbReference>
<dbReference type="HAMAP" id="MF_01014">
    <property type="entry name" value="HisA"/>
    <property type="match status" value="1"/>
</dbReference>
<dbReference type="InterPro" id="IPR013785">
    <property type="entry name" value="Aldolase_TIM"/>
</dbReference>
<dbReference type="InterPro" id="IPR006062">
    <property type="entry name" value="His_biosynth"/>
</dbReference>
<dbReference type="InterPro" id="IPR006063">
    <property type="entry name" value="HisA_bact_arch"/>
</dbReference>
<dbReference type="InterPro" id="IPR044524">
    <property type="entry name" value="Isoase_HisA-like"/>
</dbReference>
<dbReference type="InterPro" id="IPR023016">
    <property type="entry name" value="Isoase_HisA-like_bact"/>
</dbReference>
<dbReference type="InterPro" id="IPR011060">
    <property type="entry name" value="RibuloseP-bd_barrel"/>
</dbReference>
<dbReference type="NCBIfam" id="TIGR00007">
    <property type="entry name" value="1-(5-phosphoribosyl)-5-[(5-phosphoribosylamino)methylideneamino]imidazole-4-carboxamide isomerase"/>
    <property type="match status" value="1"/>
</dbReference>
<dbReference type="PANTHER" id="PTHR43090">
    <property type="entry name" value="1-(5-PHOSPHORIBOSYL)-5-[(5-PHOSPHORIBOSYLAMINO)METHYLIDENEAMINO] IMIDAZOLE-4-CARBOXAMIDE ISOMERASE"/>
    <property type="match status" value="1"/>
</dbReference>
<dbReference type="PANTHER" id="PTHR43090:SF2">
    <property type="entry name" value="1-(5-PHOSPHORIBOSYL)-5-[(5-PHOSPHORIBOSYLAMINO)METHYLIDENEAMINO] IMIDAZOLE-4-CARBOXAMIDE ISOMERASE"/>
    <property type="match status" value="1"/>
</dbReference>
<dbReference type="Pfam" id="PF00977">
    <property type="entry name" value="His_biosynth"/>
    <property type="match status" value="1"/>
</dbReference>
<dbReference type="SUPFAM" id="SSF51366">
    <property type="entry name" value="Ribulose-phoshate binding barrel"/>
    <property type="match status" value="1"/>
</dbReference>
<keyword id="KW-0028">Amino-acid biosynthesis</keyword>
<keyword id="KW-0963">Cytoplasm</keyword>
<keyword id="KW-0368">Histidine biosynthesis</keyword>
<keyword id="KW-0413">Isomerase</keyword>
<comment type="catalytic activity">
    <reaction evidence="1">
        <text>1-(5-phospho-beta-D-ribosyl)-5-[(5-phospho-beta-D-ribosylamino)methylideneamino]imidazole-4-carboxamide = 5-[(5-phospho-1-deoxy-D-ribulos-1-ylimino)methylamino]-1-(5-phospho-beta-D-ribosyl)imidazole-4-carboxamide</text>
        <dbReference type="Rhea" id="RHEA:15469"/>
        <dbReference type="ChEBI" id="CHEBI:58435"/>
        <dbReference type="ChEBI" id="CHEBI:58525"/>
        <dbReference type="EC" id="5.3.1.16"/>
    </reaction>
</comment>
<comment type="pathway">
    <text evidence="1">Amino-acid biosynthesis; L-histidine biosynthesis; L-histidine from 5-phospho-alpha-D-ribose 1-diphosphate: step 4/9.</text>
</comment>
<comment type="subcellular location">
    <subcellularLocation>
        <location evidence="1">Cytoplasm</location>
    </subcellularLocation>
</comment>
<comment type="similarity">
    <text evidence="1">Belongs to the HisA/HisF family.</text>
</comment>